<proteinExistence type="inferred from homology"/>
<protein>
    <recommendedName>
        <fullName evidence="1">Aspartyl/glutamyl-tRNA(Asn/Gln) amidotransferase subunit C</fullName>
        <shortName evidence="1">Asp/Glu-ADT subunit C</shortName>
        <ecNumber evidence="1">6.3.5.-</ecNumber>
    </recommendedName>
</protein>
<name>GATC_STRP4</name>
<dbReference type="EC" id="6.3.5.-" evidence="1"/>
<dbReference type="EMBL" id="CP001015">
    <property type="protein sequence ID" value="ACF55264.1"/>
    <property type="molecule type" value="Genomic_DNA"/>
</dbReference>
<dbReference type="SMR" id="B5E1P8"/>
<dbReference type="KEGG" id="spx:SPG_0401"/>
<dbReference type="HOGENOM" id="CLU_105899_1_2_9"/>
<dbReference type="GO" id="GO:0050566">
    <property type="term" value="F:asparaginyl-tRNA synthase (glutamine-hydrolyzing) activity"/>
    <property type="evidence" value="ECO:0007669"/>
    <property type="project" value="RHEA"/>
</dbReference>
<dbReference type="GO" id="GO:0005524">
    <property type="term" value="F:ATP binding"/>
    <property type="evidence" value="ECO:0007669"/>
    <property type="project" value="UniProtKB-KW"/>
</dbReference>
<dbReference type="GO" id="GO:0050567">
    <property type="term" value="F:glutaminyl-tRNA synthase (glutamine-hydrolyzing) activity"/>
    <property type="evidence" value="ECO:0007669"/>
    <property type="project" value="UniProtKB-UniRule"/>
</dbReference>
<dbReference type="GO" id="GO:0070681">
    <property type="term" value="P:glutaminyl-tRNAGln biosynthesis via transamidation"/>
    <property type="evidence" value="ECO:0007669"/>
    <property type="project" value="TreeGrafter"/>
</dbReference>
<dbReference type="GO" id="GO:0006450">
    <property type="term" value="P:regulation of translational fidelity"/>
    <property type="evidence" value="ECO:0007669"/>
    <property type="project" value="InterPro"/>
</dbReference>
<dbReference type="GO" id="GO:0006412">
    <property type="term" value="P:translation"/>
    <property type="evidence" value="ECO:0007669"/>
    <property type="project" value="UniProtKB-UniRule"/>
</dbReference>
<dbReference type="Gene3D" id="1.10.20.60">
    <property type="entry name" value="Glu-tRNAGln amidotransferase C subunit, N-terminal domain"/>
    <property type="match status" value="1"/>
</dbReference>
<dbReference type="HAMAP" id="MF_00122">
    <property type="entry name" value="GatC"/>
    <property type="match status" value="1"/>
</dbReference>
<dbReference type="InterPro" id="IPR036113">
    <property type="entry name" value="Asp/Glu-ADT_sf_sub_c"/>
</dbReference>
<dbReference type="InterPro" id="IPR003837">
    <property type="entry name" value="GatC"/>
</dbReference>
<dbReference type="NCBIfam" id="TIGR00135">
    <property type="entry name" value="gatC"/>
    <property type="match status" value="1"/>
</dbReference>
<dbReference type="PANTHER" id="PTHR15004">
    <property type="entry name" value="GLUTAMYL-TRNA(GLN) AMIDOTRANSFERASE SUBUNIT C, MITOCHONDRIAL"/>
    <property type="match status" value="1"/>
</dbReference>
<dbReference type="PANTHER" id="PTHR15004:SF0">
    <property type="entry name" value="GLUTAMYL-TRNA(GLN) AMIDOTRANSFERASE SUBUNIT C, MITOCHONDRIAL"/>
    <property type="match status" value="1"/>
</dbReference>
<dbReference type="Pfam" id="PF02686">
    <property type="entry name" value="GatC"/>
    <property type="match status" value="1"/>
</dbReference>
<dbReference type="SUPFAM" id="SSF141000">
    <property type="entry name" value="Glu-tRNAGln amidotransferase C subunit"/>
    <property type="match status" value="1"/>
</dbReference>
<reference key="1">
    <citation type="journal article" date="2001" name="Microb. Drug Resist.">
        <title>Annotated draft genomic sequence from a Streptococcus pneumoniae type 19F clinical isolate.</title>
        <authorList>
            <person name="Dopazo J."/>
            <person name="Mendoza A."/>
            <person name="Herrero J."/>
            <person name="Caldara F."/>
            <person name="Humbert Y."/>
            <person name="Friedli L."/>
            <person name="Guerrier M."/>
            <person name="Grand-Schenk E."/>
            <person name="Gandin C."/>
            <person name="de Francesco M."/>
            <person name="Polissi A."/>
            <person name="Buell G."/>
            <person name="Feger G."/>
            <person name="Garcia E."/>
            <person name="Peitsch M."/>
            <person name="Garcia-Bustos J.F."/>
        </authorList>
    </citation>
    <scope>NUCLEOTIDE SEQUENCE [LARGE SCALE GENOMIC DNA]</scope>
    <source>
        <strain>G54</strain>
    </source>
</reference>
<reference key="2">
    <citation type="submission" date="2008-03" db="EMBL/GenBank/DDBJ databases">
        <title>Pneumococcal beta glucoside metabolism investigated by whole genome comparison.</title>
        <authorList>
            <person name="Mulas L."/>
            <person name="Trappetti C."/>
            <person name="Hakenbeck R."/>
            <person name="Iannelli F."/>
            <person name="Pozzi G."/>
            <person name="Davidsen T.M."/>
            <person name="Tettelin H."/>
            <person name="Oggioni M."/>
        </authorList>
    </citation>
    <scope>NUCLEOTIDE SEQUENCE [LARGE SCALE GENOMIC DNA]</scope>
    <source>
        <strain>G54</strain>
    </source>
</reference>
<keyword id="KW-0067">ATP-binding</keyword>
<keyword id="KW-0436">Ligase</keyword>
<keyword id="KW-0547">Nucleotide-binding</keyword>
<keyword id="KW-0648">Protein biosynthesis</keyword>
<comment type="function">
    <text evidence="1">Allows the formation of correctly charged Asn-tRNA(Asn) or Gln-tRNA(Gln) through the transamidation of misacylated Asp-tRNA(Asn) or Glu-tRNA(Gln) in organisms which lack either or both of asparaginyl-tRNA or glutaminyl-tRNA synthetases. The reaction takes place in the presence of glutamine and ATP through an activated phospho-Asp-tRNA(Asn) or phospho-Glu-tRNA(Gln).</text>
</comment>
<comment type="catalytic activity">
    <reaction evidence="1">
        <text>L-glutamyl-tRNA(Gln) + L-glutamine + ATP + H2O = L-glutaminyl-tRNA(Gln) + L-glutamate + ADP + phosphate + H(+)</text>
        <dbReference type="Rhea" id="RHEA:17521"/>
        <dbReference type="Rhea" id="RHEA-COMP:9681"/>
        <dbReference type="Rhea" id="RHEA-COMP:9684"/>
        <dbReference type="ChEBI" id="CHEBI:15377"/>
        <dbReference type="ChEBI" id="CHEBI:15378"/>
        <dbReference type="ChEBI" id="CHEBI:29985"/>
        <dbReference type="ChEBI" id="CHEBI:30616"/>
        <dbReference type="ChEBI" id="CHEBI:43474"/>
        <dbReference type="ChEBI" id="CHEBI:58359"/>
        <dbReference type="ChEBI" id="CHEBI:78520"/>
        <dbReference type="ChEBI" id="CHEBI:78521"/>
        <dbReference type="ChEBI" id="CHEBI:456216"/>
    </reaction>
</comment>
<comment type="catalytic activity">
    <reaction evidence="1">
        <text>L-aspartyl-tRNA(Asn) + L-glutamine + ATP + H2O = L-asparaginyl-tRNA(Asn) + L-glutamate + ADP + phosphate + 2 H(+)</text>
        <dbReference type="Rhea" id="RHEA:14513"/>
        <dbReference type="Rhea" id="RHEA-COMP:9674"/>
        <dbReference type="Rhea" id="RHEA-COMP:9677"/>
        <dbReference type="ChEBI" id="CHEBI:15377"/>
        <dbReference type="ChEBI" id="CHEBI:15378"/>
        <dbReference type="ChEBI" id="CHEBI:29985"/>
        <dbReference type="ChEBI" id="CHEBI:30616"/>
        <dbReference type="ChEBI" id="CHEBI:43474"/>
        <dbReference type="ChEBI" id="CHEBI:58359"/>
        <dbReference type="ChEBI" id="CHEBI:78515"/>
        <dbReference type="ChEBI" id="CHEBI:78516"/>
        <dbReference type="ChEBI" id="CHEBI:456216"/>
    </reaction>
</comment>
<comment type="subunit">
    <text evidence="1">Heterotrimer of A, B and C subunits.</text>
</comment>
<comment type="similarity">
    <text evidence="1">Belongs to the GatC family.</text>
</comment>
<gene>
    <name evidence="1" type="primary">gatC</name>
    <name type="ordered locus">SPG_0401</name>
</gene>
<feature type="chain" id="PRO_1000095316" description="Aspartyl/glutamyl-tRNA(Asn/Gln) amidotransferase subunit C">
    <location>
        <begin position="1"/>
        <end position="100"/>
    </location>
</feature>
<organism>
    <name type="scientific">Streptococcus pneumoniae serotype 19F (strain G54)</name>
    <dbReference type="NCBI Taxonomy" id="512566"/>
    <lineage>
        <taxon>Bacteria</taxon>
        <taxon>Bacillati</taxon>
        <taxon>Bacillota</taxon>
        <taxon>Bacilli</taxon>
        <taxon>Lactobacillales</taxon>
        <taxon>Streptococcaceae</taxon>
        <taxon>Streptococcus</taxon>
    </lineage>
</organism>
<accession>B5E1P8</accession>
<sequence>MKITQEEVTHVANLSKLRFSEKETAAFATTLSKIVDMVELLGEVDTTGVAPTTTMADRKTVLRPDVAEEGTDRDRLFKNVPKKDNYYIKVPAILDDGGDA</sequence>
<evidence type="ECO:0000255" key="1">
    <source>
        <dbReference type="HAMAP-Rule" id="MF_00122"/>
    </source>
</evidence>